<keyword id="KW-0143">Chaperone</keyword>
<keyword id="KW-0963">Cytoplasm</keyword>
<keyword id="KW-0342">GTP-binding</keyword>
<keyword id="KW-0996">Nickel insertion</keyword>
<keyword id="KW-0547">Nucleotide-binding</keyword>
<keyword id="KW-1185">Reference proteome</keyword>
<comment type="function">
    <text evidence="1">Facilitates the functional incorporation of the urease nickel metallocenter. This process requires GTP hydrolysis, probably effectuated by UreG.</text>
</comment>
<comment type="subunit">
    <text evidence="1">Homodimer. UreD, UreF and UreG form a complex that acts as a GTP-hydrolysis-dependent molecular chaperone, activating the urease apoprotein by helping to assemble the nickel containing metallocenter of UreC. The UreE protein probably delivers the nickel.</text>
</comment>
<comment type="subcellular location">
    <subcellularLocation>
        <location evidence="1">Cytoplasm</location>
    </subcellularLocation>
</comment>
<comment type="similarity">
    <text evidence="1">Belongs to the SIMIBI class G3E GTPase family. UreG subfamily.</text>
</comment>
<name>UREG_MICLC</name>
<reference key="1">
    <citation type="journal article" date="2010" name="J. Bacteriol.">
        <title>Genome sequence of the Fleming strain of Micrococcus luteus, a simple free-living actinobacterium.</title>
        <authorList>
            <person name="Young M."/>
            <person name="Artsatbanov V."/>
            <person name="Beller H.R."/>
            <person name="Chandra G."/>
            <person name="Chater K.F."/>
            <person name="Dover L.G."/>
            <person name="Goh E.B."/>
            <person name="Kahan T."/>
            <person name="Kaprelyants A.S."/>
            <person name="Kyrpides N."/>
            <person name="Lapidus A."/>
            <person name="Lowry S.R."/>
            <person name="Lykidis A."/>
            <person name="Mahillon J."/>
            <person name="Markowitz V."/>
            <person name="Mavromatis K."/>
            <person name="Mukamolova G.V."/>
            <person name="Oren A."/>
            <person name="Rokem J.S."/>
            <person name="Smith M.C."/>
            <person name="Young D.I."/>
            <person name="Greenblatt C.L."/>
        </authorList>
    </citation>
    <scope>NUCLEOTIDE SEQUENCE [LARGE SCALE GENOMIC DNA]</scope>
    <source>
        <strain>ATCC 4698 / DSM 20030 / JCM 1464 / CCM 169 / CCUG 5858 / IAM 1056 / NBRC 3333 / NCIMB 9278 / NCTC 2665 / VKM Ac-2230</strain>
    </source>
</reference>
<accession>C5C8U6</accession>
<evidence type="ECO:0000255" key="1">
    <source>
        <dbReference type="HAMAP-Rule" id="MF_01389"/>
    </source>
</evidence>
<protein>
    <recommendedName>
        <fullName evidence="1">Urease accessory protein UreG</fullName>
    </recommendedName>
</protein>
<sequence length="203" mass="22154">MDPVIIGIGGPVGAGKTQLVERLTRAMSEEISMAAITNDIYTIEDAKILSRTSVLPEERIVGIETGGCPHTAIREDTSMNEAAIEQLKARFPDLQVIFVESGGDNLSATFSPELVDFSIYIIDVAQGEKIPRKAGQGMIKSDLFIVNKTDLAPYVGADLSVMESDSKVFRKDRPFAFTNLKTDEGLDVVMDWIRNDVLMADLG</sequence>
<dbReference type="EMBL" id="CP001628">
    <property type="protein sequence ID" value="ACS29898.1"/>
    <property type="molecule type" value="Genomic_DNA"/>
</dbReference>
<dbReference type="RefSeq" id="WP_002854154.1">
    <property type="nucleotide sequence ID" value="NZ_WBMF01000038.1"/>
</dbReference>
<dbReference type="SMR" id="C5C8U6"/>
<dbReference type="STRING" id="465515.Mlut_03470"/>
<dbReference type="EnsemblBacteria" id="ACS29898">
    <property type="protein sequence ID" value="ACS29898"/>
    <property type="gene ID" value="Mlut_03470"/>
</dbReference>
<dbReference type="GeneID" id="93344526"/>
<dbReference type="KEGG" id="mlu:Mlut_03470"/>
<dbReference type="eggNOG" id="COG0378">
    <property type="taxonomic scope" value="Bacteria"/>
</dbReference>
<dbReference type="HOGENOM" id="CLU_072144_1_0_11"/>
<dbReference type="Proteomes" id="UP000000738">
    <property type="component" value="Chromosome"/>
</dbReference>
<dbReference type="GO" id="GO:0005737">
    <property type="term" value="C:cytoplasm"/>
    <property type="evidence" value="ECO:0007669"/>
    <property type="project" value="UniProtKB-SubCell"/>
</dbReference>
<dbReference type="GO" id="GO:0005525">
    <property type="term" value="F:GTP binding"/>
    <property type="evidence" value="ECO:0007669"/>
    <property type="project" value="UniProtKB-KW"/>
</dbReference>
<dbReference type="GO" id="GO:0003924">
    <property type="term" value="F:GTPase activity"/>
    <property type="evidence" value="ECO:0007669"/>
    <property type="project" value="InterPro"/>
</dbReference>
<dbReference type="GO" id="GO:0016151">
    <property type="term" value="F:nickel cation binding"/>
    <property type="evidence" value="ECO:0007669"/>
    <property type="project" value="UniProtKB-UniRule"/>
</dbReference>
<dbReference type="GO" id="GO:0043419">
    <property type="term" value="P:urea catabolic process"/>
    <property type="evidence" value="ECO:0007669"/>
    <property type="project" value="InterPro"/>
</dbReference>
<dbReference type="CDD" id="cd05540">
    <property type="entry name" value="UreG"/>
    <property type="match status" value="1"/>
</dbReference>
<dbReference type="Gene3D" id="3.40.50.300">
    <property type="entry name" value="P-loop containing nucleotide triphosphate hydrolases"/>
    <property type="match status" value="1"/>
</dbReference>
<dbReference type="HAMAP" id="MF_01389">
    <property type="entry name" value="UreG"/>
    <property type="match status" value="1"/>
</dbReference>
<dbReference type="InterPro" id="IPR003495">
    <property type="entry name" value="CobW/HypB/UreG_nucleotide-bd"/>
</dbReference>
<dbReference type="InterPro" id="IPR027417">
    <property type="entry name" value="P-loop_NTPase"/>
</dbReference>
<dbReference type="InterPro" id="IPR004400">
    <property type="entry name" value="UreG"/>
</dbReference>
<dbReference type="NCBIfam" id="TIGR00101">
    <property type="entry name" value="ureG"/>
    <property type="match status" value="1"/>
</dbReference>
<dbReference type="PANTHER" id="PTHR31715">
    <property type="entry name" value="UREASE ACCESSORY PROTEIN G"/>
    <property type="match status" value="1"/>
</dbReference>
<dbReference type="PANTHER" id="PTHR31715:SF0">
    <property type="entry name" value="UREASE ACCESSORY PROTEIN G"/>
    <property type="match status" value="1"/>
</dbReference>
<dbReference type="Pfam" id="PF02492">
    <property type="entry name" value="cobW"/>
    <property type="match status" value="1"/>
</dbReference>
<dbReference type="PIRSF" id="PIRSF005624">
    <property type="entry name" value="Ni-bind_GTPase"/>
    <property type="match status" value="1"/>
</dbReference>
<dbReference type="SUPFAM" id="SSF52540">
    <property type="entry name" value="P-loop containing nucleoside triphosphate hydrolases"/>
    <property type="match status" value="1"/>
</dbReference>
<gene>
    <name evidence="1" type="primary">ureG</name>
    <name type="ordered locus">Mlut_03470</name>
</gene>
<organism>
    <name type="scientific">Micrococcus luteus (strain ATCC 4698 / DSM 20030 / JCM 1464 / CCM 169 / CCUG 5858 / IAM 1056 / NBRC 3333 / NCIMB 9278 / NCTC 2665 / VKM Ac-2230)</name>
    <name type="common">Micrococcus lysodeikticus</name>
    <dbReference type="NCBI Taxonomy" id="465515"/>
    <lineage>
        <taxon>Bacteria</taxon>
        <taxon>Bacillati</taxon>
        <taxon>Actinomycetota</taxon>
        <taxon>Actinomycetes</taxon>
        <taxon>Micrococcales</taxon>
        <taxon>Micrococcaceae</taxon>
        <taxon>Micrococcus</taxon>
    </lineage>
</organism>
<feature type="chain" id="PRO_1000215138" description="Urease accessory protein UreG">
    <location>
        <begin position="1"/>
        <end position="203"/>
    </location>
</feature>
<feature type="binding site" evidence="1">
    <location>
        <begin position="10"/>
        <end position="17"/>
    </location>
    <ligand>
        <name>GTP</name>
        <dbReference type="ChEBI" id="CHEBI:37565"/>
    </ligand>
</feature>
<proteinExistence type="inferred from homology"/>